<accession>Q5HM34</accession>
<feature type="chain" id="PRO_0000050265" description="Lactose phosphotransferase system repressor">
    <location>
        <begin position="1"/>
        <end position="251"/>
    </location>
</feature>
<feature type="domain" description="HTH deoR-type" evidence="2">
    <location>
        <begin position="3"/>
        <end position="58"/>
    </location>
</feature>
<feature type="DNA-binding region" description="H-T-H motif" evidence="2">
    <location>
        <begin position="20"/>
        <end position="39"/>
    </location>
</feature>
<keyword id="KW-0238">DNA-binding</keyword>
<keyword id="KW-0423">Lactose metabolism</keyword>
<keyword id="KW-1185">Reference proteome</keyword>
<keyword id="KW-0678">Repressor</keyword>
<keyword id="KW-0804">Transcription</keyword>
<keyword id="KW-0805">Transcription regulation</keyword>
<sequence length="251" mass="28658">MNKYDRLDEITKLVNKRGSVRTNEIVEDLNVSDMTVRRDLAELEEKGVLTKIHGGARSNSAFQYKEMSHQEKHTRFIEEKRFIAKNAVDLIEDGDTIFLGPGTTVQKLAEEINHYSLTIITNCLPVFNILIKKQTLHFRVYLLGGEMRDLTEAFVGEMTNQLLSQLRFSKMFFSSNGVKDGLAMTSSIEEAYTQQIALSHSLEKYLLIDSSKIGKDDFSSFCELRELNAVLTDNNDLEKKEKIESYVEVIS</sequence>
<organism>
    <name type="scientific">Staphylococcus epidermidis (strain ATCC 35984 / DSM 28319 / BCRC 17069 / CCUG 31568 / BM 3577 / RP62A)</name>
    <dbReference type="NCBI Taxonomy" id="176279"/>
    <lineage>
        <taxon>Bacteria</taxon>
        <taxon>Bacillati</taxon>
        <taxon>Bacillota</taxon>
        <taxon>Bacilli</taxon>
        <taxon>Bacillales</taxon>
        <taxon>Staphylococcaceae</taxon>
        <taxon>Staphylococcus</taxon>
    </lineage>
</organism>
<name>LACR_STAEQ</name>
<dbReference type="EMBL" id="CP000029">
    <property type="protein sequence ID" value="AAW55181.1"/>
    <property type="molecule type" value="Genomic_DNA"/>
</dbReference>
<dbReference type="RefSeq" id="WP_001829761.1">
    <property type="nucleotide sequence ID" value="NC_002976.3"/>
</dbReference>
<dbReference type="SMR" id="Q5HM34"/>
<dbReference type="STRING" id="176279.SERP1796"/>
<dbReference type="KEGG" id="ser:SERP1796"/>
<dbReference type="eggNOG" id="COG1349">
    <property type="taxonomic scope" value="Bacteria"/>
</dbReference>
<dbReference type="HOGENOM" id="CLU_060699_1_0_9"/>
<dbReference type="Proteomes" id="UP000000531">
    <property type="component" value="Chromosome"/>
</dbReference>
<dbReference type="GO" id="GO:0003677">
    <property type="term" value="F:DNA binding"/>
    <property type="evidence" value="ECO:0007669"/>
    <property type="project" value="UniProtKB-KW"/>
</dbReference>
<dbReference type="GO" id="GO:0003700">
    <property type="term" value="F:DNA-binding transcription factor activity"/>
    <property type="evidence" value="ECO:0007669"/>
    <property type="project" value="InterPro"/>
</dbReference>
<dbReference type="GO" id="GO:0005988">
    <property type="term" value="P:lactose metabolic process"/>
    <property type="evidence" value="ECO:0007669"/>
    <property type="project" value="UniProtKB-KW"/>
</dbReference>
<dbReference type="Gene3D" id="3.40.50.1360">
    <property type="match status" value="1"/>
</dbReference>
<dbReference type="Gene3D" id="1.10.10.10">
    <property type="entry name" value="Winged helix-like DNA-binding domain superfamily/Winged helix DNA-binding domain"/>
    <property type="match status" value="1"/>
</dbReference>
<dbReference type="InterPro" id="IPR050313">
    <property type="entry name" value="Carb_Metab_HTH_regulators"/>
</dbReference>
<dbReference type="InterPro" id="IPR014036">
    <property type="entry name" value="DeoR-like_C"/>
</dbReference>
<dbReference type="InterPro" id="IPR001034">
    <property type="entry name" value="DeoR_HTH"/>
</dbReference>
<dbReference type="InterPro" id="IPR037171">
    <property type="entry name" value="NagB/RpiA_transferase-like"/>
</dbReference>
<dbReference type="InterPro" id="IPR018356">
    <property type="entry name" value="Tscrpt_reg_HTH_DeoR_CS"/>
</dbReference>
<dbReference type="InterPro" id="IPR036388">
    <property type="entry name" value="WH-like_DNA-bd_sf"/>
</dbReference>
<dbReference type="InterPro" id="IPR036390">
    <property type="entry name" value="WH_DNA-bd_sf"/>
</dbReference>
<dbReference type="PANTHER" id="PTHR30363:SF4">
    <property type="entry name" value="GLYCEROL-3-PHOSPHATE REGULON REPRESSOR"/>
    <property type="match status" value="1"/>
</dbReference>
<dbReference type="PANTHER" id="PTHR30363">
    <property type="entry name" value="HTH-TYPE TRANSCRIPTIONAL REGULATOR SRLR-RELATED"/>
    <property type="match status" value="1"/>
</dbReference>
<dbReference type="Pfam" id="PF00455">
    <property type="entry name" value="DeoRC"/>
    <property type="match status" value="1"/>
</dbReference>
<dbReference type="Pfam" id="PF08220">
    <property type="entry name" value="HTH_DeoR"/>
    <property type="match status" value="1"/>
</dbReference>
<dbReference type="PRINTS" id="PR00037">
    <property type="entry name" value="HTHLACR"/>
</dbReference>
<dbReference type="SMART" id="SM01134">
    <property type="entry name" value="DeoRC"/>
    <property type="match status" value="1"/>
</dbReference>
<dbReference type="SMART" id="SM00420">
    <property type="entry name" value="HTH_DEOR"/>
    <property type="match status" value="1"/>
</dbReference>
<dbReference type="SUPFAM" id="SSF100950">
    <property type="entry name" value="NagB/RpiA/CoA transferase-like"/>
    <property type="match status" value="1"/>
</dbReference>
<dbReference type="SUPFAM" id="SSF46785">
    <property type="entry name" value="Winged helix' DNA-binding domain"/>
    <property type="match status" value="1"/>
</dbReference>
<dbReference type="PROSITE" id="PS00894">
    <property type="entry name" value="HTH_DEOR_1"/>
    <property type="match status" value="1"/>
</dbReference>
<dbReference type="PROSITE" id="PS51000">
    <property type="entry name" value="HTH_DEOR_2"/>
    <property type="match status" value="1"/>
</dbReference>
<evidence type="ECO:0000250" key="1"/>
<evidence type="ECO:0000255" key="2">
    <source>
        <dbReference type="PROSITE-ProRule" id="PRU00349"/>
    </source>
</evidence>
<comment type="function">
    <text evidence="1">Repressor of the lactose catabolism operon. Galactose-6-phosphate is the inducer (By similarity).</text>
</comment>
<gene>
    <name type="primary">lacR</name>
    <name type="ordered locus">SERP1796</name>
</gene>
<proteinExistence type="inferred from homology"/>
<reference key="1">
    <citation type="journal article" date="2005" name="J. Bacteriol.">
        <title>Insights on evolution of virulence and resistance from the complete genome analysis of an early methicillin-resistant Staphylococcus aureus strain and a biofilm-producing methicillin-resistant Staphylococcus epidermidis strain.</title>
        <authorList>
            <person name="Gill S.R."/>
            <person name="Fouts D.E."/>
            <person name="Archer G.L."/>
            <person name="Mongodin E.F."/>
            <person name="DeBoy R.T."/>
            <person name="Ravel J."/>
            <person name="Paulsen I.T."/>
            <person name="Kolonay J.F."/>
            <person name="Brinkac L.M."/>
            <person name="Beanan M.J."/>
            <person name="Dodson R.J."/>
            <person name="Daugherty S.C."/>
            <person name="Madupu R."/>
            <person name="Angiuoli S.V."/>
            <person name="Durkin A.S."/>
            <person name="Haft D.H."/>
            <person name="Vamathevan J.J."/>
            <person name="Khouri H."/>
            <person name="Utterback T.R."/>
            <person name="Lee C."/>
            <person name="Dimitrov G."/>
            <person name="Jiang L."/>
            <person name="Qin H."/>
            <person name="Weidman J."/>
            <person name="Tran K."/>
            <person name="Kang K.H."/>
            <person name="Hance I.R."/>
            <person name="Nelson K.E."/>
            <person name="Fraser C.M."/>
        </authorList>
    </citation>
    <scope>NUCLEOTIDE SEQUENCE [LARGE SCALE GENOMIC DNA]</scope>
    <source>
        <strain>ATCC 35984 / DSM 28319 / BCRC 17069 / CCUG 31568 / BM 3577 / RP62A</strain>
    </source>
</reference>
<protein>
    <recommendedName>
        <fullName>Lactose phosphotransferase system repressor</fullName>
    </recommendedName>
</protein>